<reference evidence="6" key="1">
    <citation type="journal article" date="2002" name="Comp. Biochem. Physiol.">
        <title>Purification and characterization of apolipophorin III from immune hemolymph of Heliothis virescens pupae.</title>
        <authorList>
            <person name="Chung K.T."/>
            <person name="Ourth D.D."/>
        </authorList>
    </citation>
    <scope>PROTEIN SEQUENCE</scope>
    <scope>FUNCTION</scope>
    <scope>INDUCTION</scope>
    <scope>MASS SPECTROMETRY</scope>
    <source>
        <tissue evidence="4">Hemolymph</tissue>
    </source>
</reference>
<proteinExistence type="evidence at protein level"/>
<keyword id="KW-0903">Direct protein sequencing</keyword>
<keyword id="KW-0348">Hemagglutinin</keyword>
<keyword id="KW-0445">Lipid transport</keyword>
<keyword id="KW-0964">Secreted</keyword>
<keyword id="KW-0813">Transport</keyword>
<accession>P86356</accession>
<name>APL3_HELVI</name>
<comment type="function">
    <text evidence="2 4">Assists in the loading of diacylglycerol, generated from triacylglycerol stores in the fat body through the action of adipokinetic hormone, into lipophorin, the hemolymph lipoprotein. It increases the lipid carrying capacity of lipophorin by covering the expanding hydrophobic surface resulting from diacylglycerol uptake. It thus plays a critical role in the transport of lipids during flight in several species of insects (By similarity). Has hemagglutinating activity towards rabbit erythrocytes.</text>
</comment>
<comment type="subunit">
    <text evidence="1">Equilibrium between a soluble monomer and a bound lipoprotein form. Apolipophorin-3 associates with lipophorin during lipid loading until each particle contains 9 or 14 molecules of apolipophorin-3 (By similarity).</text>
</comment>
<comment type="subcellular location">
    <subcellularLocation>
        <location evidence="2">Secreted</location>
    </subcellularLocation>
</comment>
<comment type="tissue specificity">
    <text evidence="6">Hemolymph.</text>
</comment>
<comment type="induction">
    <text evidence="4">By bacterial infection.</text>
</comment>
<comment type="mass spectrometry" mass="17965.9" error="5.0" method="Electrospray" evidence="4"/>
<comment type="similarity">
    <text evidence="3">Belongs to the insect apolipophorin-3 family.</text>
</comment>
<protein>
    <recommendedName>
        <fullName evidence="2">Apolipophorin-3</fullName>
    </recommendedName>
    <alternativeName>
        <fullName evidence="5">Apolipophorin-III</fullName>
        <shortName evidence="5">ApoLp-III</shortName>
    </alternativeName>
</protein>
<organism>
    <name type="scientific">Heliothis virescens</name>
    <name type="common">Tobacco budworm moth</name>
    <dbReference type="NCBI Taxonomy" id="7102"/>
    <lineage>
        <taxon>Eukaryota</taxon>
        <taxon>Metazoa</taxon>
        <taxon>Ecdysozoa</taxon>
        <taxon>Arthropoda</taxon>
        <taxon>Hexapoda</taxon>
        <taxon>Insecta</taxon>
        <taxon>Pterygota</taxon>
        <taxon>Neoptera</taxon>
        <taxon>Endopterygota</taxon>
        <taxon>Lepidoptera</taxon>
        <taxon>Glossata</taxon>
        <taxon>Ditrysia</taxon>
        <taxon>Noctuoidea</taxon>
        <taxon>Noctuidae</taxon>
        <taxon>Heliothinae</taxon>
        <taxon>Heliothis</taxon>
    </lineage>
</organism>
<feature type="chain" id="PRO_0000392512" description="Apolipophorin-3">
    <location>
        <begin position="1"/>
        <end position="35" status="greater than"/>
    </location>
</feature>
<feature type="non-terminal residue" evidence="5">
    <location>
        <position position="35"/>
    </location>
</feature>
<sequence length="35" mass="3830">DAPASPLADIEKHAAEFQKTISEQFNSLVNSKNTQ</sequence>
<evidence type="ECO:0000250" key="1"/>
<evidence type="ECO:0000250" key="2">
    <source>
        <dbReference type="UniProtKB" id="P13276"/>
    </source>
</evidence>
<evidence type="ECO:0000255" key="3"/>
<evidence type="ECO:0000269" key="4">
    <source>
    </source>
</evidence>
<evidence type="ECO:0000303" key="5">
    <source>
    </source>
</evidence>
<evidence type="ECO:0000305" key="6"/>
<dbReference type="GO" id="GO:0005576">
    <property type="term" value="C:extracellular region"/>
    <property type="evidence" value="ECO:0007669"/>
    <property type="project" value="UniProtKB-SubCell"/>
</dbReference>
<dbReference type="GO" id="GO:0006869">
    <property type="term" value="P:lipid transport"/>
    <property type="evidence" value="ECO:0007669"/>
    <property type="project" value="UniProtKB-KW"/>
</dbReference>
<dbReference type="Gene3D" id="1.20.120.20">
    <property type="entry name" value="Apolipoprotein"/>
    <property type="match status" value="1"/>
</dbReference>
<dbReference type="SUPFAM" id="SSF47857">
    <property type="entry name" value="Apolipophorin-III"/>
    <property type="match status" value="1"/>
</dbReference>